<protein>
    <recommendedName>
        <fullName evidence="1">SsrA-binding protein</fullName>
    </recommendedName>
    <alternativeName>
        <fullName evidence="1">Small protein B</fullName>
    </alternativeName>
</protein>
<comment type="function">
    <text evidence="1">Required for rescue of stalled ribosomes mediated by trans-translation. Binds to transfer-messenger RNA (tmRNA), required for stable association of tmRNA with ribosomes. tmRNA and SmpB together mimic tRNA shape, replacing the anticodon stem-loop with SmpB. tmRNA is encoded by the ssrA gene; the 2 termini fold to resemble tRNA(Ala) and it encodes a 'tag peptide', a short internal open reading frame. During trans-translation Ala-aminoacylated tmRNA acts like a tRNA, entering the A-site of stalled ribosomes, displacing the stalled mRNA. The ribosome then switches to translate the ORF on the tmRNA; the nascent peptide is terminated with the 'tag peptide' encoded by the tmRNA and targeted for degradation. The ribosome is freed to recommence translation, which seems to be the essential function of trans-translation.</text>
</comment>
<comment type="subcellular location">
    <subcellularLocation>
        <location evidence="1">Cytoplasm</location>
    </subcellularLocation>
    <text evidence="1">The tmRNA-SmpB complex associates with stalled 70S ribosomes.</text>
</comment>
<comment type="similarity">
    <text evidence="1">Belongs to the SmpB family.</text>
</comment>
<organism>
    <name type="scientific">Bordetella parapertussis (strain 12822 / ATCC BAA-587 / NCTC 13253)</name>
    <dbReference type="NCBI Taxonomy" id="257311"/>
    <lineage>
        <taxon>Bacteria</taxon>
        <taxon>Pseudomonadati</taxon>
        <taxon>Pseudomonadota</taxon>
        <taxon>Betaproteobacteria</taxon>
        <taxon>Burkholderiales</taxon>
        <taxon>Alcaligenaceae</taxon>
        <taxon>Bordetella</taxon>
    </lineage>
</organism>
<gene>
    <name evidence="1" type="primary">smpB</name>
    <name type="ordered locus">BPP1549</name>
</gene>
<dbReference type="EMBL" id="BX640427">
    <property type="protein sequence ID" value="CAE36851.1"/>
    <property type="molecule type" value="Genomic_DNA"/>
</dbReference>
<dbReference type="RefSeq" id="WP_010928088.1">
    <property type="nucleotide sequence ID" value="NC_002928.3"/>
</dbReference>
<dbReference type="SMR" id="Q7WA41"/>
<dbReference type="GeneID" id="93203308"/>
<dbReference type="KEGG" id="bpa:BPP1549"/>
<dbReference type="HOGENOM" id="CLU_108953_3_0_4"/>
<dbReference type="Proteomes" id="UP000001421">
    <property type="component" value="Chromosome"/>
</dbReference>
<dbReference type="GO" id="GO:0005829">
    <property type="term" value="C:cytosol"/>
    <property type="evidence" value="ECO:0007669"/>
    <property type="project" value="TreeGrafter"/>
</dbReference>
<dbReference type="GO" id="GO:0003723">
    <property type="term" value="F:RNA binding"/>
    <property type="evidence" value="ECO:0007669"/>
    <property type="project" value="UniProtKB-UniRule"/>
</dbReference>
<dbReference type="GO" id="GO:0070929">
    <property type="term" value="P:trans-translation"/>
    <property type="evidence" value="ECO:0007669"/>
    <property type="project" value="UniProtKB-UniRule"/>
</dbReference>
<dbReference type="CDD" id="cd09294">
    <property type="entry name" value="SmpB"/>
    <property type="match status" value="1"/>
</dbReference>
<dbReference type="Gene3D" id="2.40.280.10">
    <property type="match status" value="1"/>
</dbReference>
<dbReference type="HAMAP" id="MF_00023">
    <property type="entry name" value="SmpB"/>
    <property type="match status" value="1"/>
</dbReference>
<dbReference type="InterPro" id="IPR023620">
    <property type="entry name" value="SmpB"/>
</dbReference>
<dbReference type="InterPro" id="IPR000037">
    <property type="entry name" value="SsrA-bd_prot"/>
</dbReference>
<dbReference type="InterPro" id="IPR020081">
    <property type="entry name" value="SsrA-bd_prot_CS"/>
</dbReference>
<dbReference type="NCBIfam" id="NF003843">
    <property type="entry name" value="PRK05422.1"/>
    <property type="match status" value="1"/>
</dbReference>
<dbReference type="NCBIfam" id="TIGR00086">
    <property type="entry name" value="smpB"/>
    <property type="match status" value="1"/>
</dbReference>
<dbReference type="PANTHER" id="PTHR30308:SF2">
    <property type="entry name" value="SSRA-BINDING PROTEIN"/>
    <property type="match status" value="1"/>
</dbReference>
<dbReference type="PANTHER" id="PTHR30308">
    <property type="entry name" value="TMRNA-BINDING COMPONENT OF TRANS-TRANSLATION TAGGING COMPLEX"/>
    <property type="match status" value="1"/>
</dbReference>
<dbReference type="Pfam" id="PF01668">
    <property type="entry name" value="SmpB"/>
    <property type="match status" value="1"/>
</dbReference>
<dbReference type="SUPFAM" id="SSF74982">
    <property type="entry name" value="Small protein B (SmpB)"/>
    <property type="match status" value="1"/>
</dbReference>
<dbReference type="PROSITE" id="PS01317">
    <property type="entry name" value="SSRP"/>
    <property type="match status" value="1"/>
</dbReference>
<accession>Q7WA41</accession>
<name>SSRP_BORPA</name>
<evidence type="ECO:0000255" key="1">
    <source>
        <dbReference type="HAMAP-Rule" id="MF_00023"/>
    </source>
</evidence>
<sequence>MSIIDNRKATHDYFIEDRYEAGMVLEGWEVKAIRDGRVHLKESYVIVRDGEIYLLGMHVSPLPTASTHIRPDATRTRKLLLKAEEIRKLIGKVEQRGYTLVPLNLHYKNGRIKLDFALGRGKKLYDKRDTAREKDWQREKERVLKHDTRVNQRDS</sequence>
<keyword id="KW-0963">Cytoplasm</keyword>
<keyword id="KW-0694">RNA-binding</keyword>
<proteinExistence type="inferred from homology"/>
<reference key="1">
    <citation type="journal article" date="2003" name="Nat. Genet.">
        <title>Comparative analysis of the genome sequences of Bordetella pertussis, Bordetella parapertussis and Bordetella bronchiseptica.</title>
        <authorList>
            <person name="Parkhill J."/>
            <person name="Sebaihia M."/>
            <person name="Preston A."/>
            <person name="Murphy L.D."/>
            <person name="Thomson N.R."/>
            <person name="Harris D.E."/>
            <person name="Holden M.T.G."/>
            <person name="Churcher C.M."/>
            <person name="Bentley S.D."/>
            <person name="Mungall K.L."/>
            <person name="Cerdeno-Tarraga A.-M."/>
            <person name="Temple L."/>
            <person name="James K.D."/>
            <person name="Harris B."/>
            <person name="Quail M.A."/>
            <person name="Achtman M."/>
            <person name="Atkin R."/>
            <person name="Baker S."/>
            <person name="Basham D."/>
            <person name="Bason N."/>
            <person name="Cherevach I."/>
            <person name="Chillingworth T."/>
            <person name="Collins M."/>
            <person name="Cronin A."/>
            <person name="Davis P."/>
            <person name="Doggett J."/>
            <person name="Feltwell T."/>
            <person name="Goble A."/>
            <person name="Hamlin N."/>
            <person name="Hauser H."/>
            <person name="Holroyd S."/>
            <person name="Jagels K."/>
            <person name="Leather S."/>
            <person name="Moule S."/>
            <person name="Norberczak H."/>
            <person name="O'Neil S."/>
            <person name="Ormond D."/>
            <person name="Price C."/>
            <person name="Rabbinowitsch E."/>
            <person name="Rutter S."/>
            <person name="Sanders M."/>
            <person name="Saunders D."/>
            <person name="Seeger K."/>
            <person name="Sharp S."/>
            <person name="Simmonds M."/>
            <person name="Skelton J."/>
            <person name="Squares R."/>
            <person name="Squares S."/>
            <person name="Stevens K."/>
            <person name="Unwin L."/>
            <person name="Whitehead S."/>
            <person name="Barrell B.G."/>
            <person name="Maskell D.J."/>
        </authorList>
    </citation>
    <scope>NUCLEOTIDE SEQUENCE [LARGE SCALE GENOMIC DNA]</scope>
    <source>
        <strain>12822 / ATCC BAA-587 / NCTC 13253</strain>
    </source>
</reference>
<feature type="chain" id="PRO_0000102915" description="SsrA-binding protein">
    <location>
        <begin position="1"/>
        <end position="155"/>
    </location>
</feature>